<comment type="function">
    <text evidence="1">Specifically phosphorylates the activated forms of G protein-coupled receptors.</text>
</comment>
<comment type="catalytic activity">
    <reaction>
        <text>[G-protein-coupled receptor] + ATP = [G-protein-coupled receptor]-phosphate + ADP + H(+)</text>
        <dbReference type="Rhea" id="RHEA:12008"/>
        <dbReference type="Rhea" id="RHEA-COMP:11260"/>
        <dbReference type="Rhea" id="RHEA-COMP:11261"/>
        <dbReference type="ChEBI" id="CHEBI:15378"/>
        <dbReference type="ChEBI" id="CHEBI:30616"/>
        <dbReference type="ChEBI" id="CHEBI:43176"/>
        <dbReference type="ChEBI" id="CHEBI:68546"/>
        <dbReference type="ChEBI" id="CHEBI:456216"/>
        <dbReference type="EC" id="2.7.11.16"/>
    </reaction>
</comment>
<comment type="similarity">
    <text evidence="7">Belongs to the protein kinase superfamily. AGC Ser/Thr protein kinase family. GPRK subfamily.</text>
</comment>
<protein>
    <recommendedName>
        <fullName>G protein-coupled receptor kinase 1</fullName>
        <ecNumber>2.7.11.16</ecNumber>
    </recommendedName>
</protein>
<sequence>MEIENIVANTVYIKARESGGQKKGKSKKWKNYLQFPHYTECLPLKTEIEVTYAFVVEKQPIGKLLFHEFCQATNSQYHQCCQFLTKVEEYETSDDDGQSRRDLASSIVSLLHSKPEDNPSGSQDEQEFWCSFLSDEVISTCITTADSATHDDEPRSDIFTEPYRLTCQYLTDAPFKEFAESMYFHRFLQWKWLEKRPVDKHTFRLYRVLGKGGFGEVCACQVRASGKMYALKKLEKKRVKKRHAETLSLNEKQILQRINSPFVVSLAYAYETKDALCLVLTLMNGGDLKFHLYNLMPGGFDEKRVQFYAAEITLGLQHLHSERILYRDLKPENILLDDFGHVRISDLGLAVEIKDNEPIKGRVGTVGYMAPEIVKNERYSYGVDWWGVGCLIYEMIEGKAPFRQRKEKVKREEVERRVREDQEKYSEKFSEAARTLCRGLLHKEPGFRLGCRRVGRPEDGAEEIRAHPFFNTADTVTGREPVPWKKMEAGKVTPPFCPDPRAVYAKDVLDIEQFSTVKGVRLDATDTQFYGKFNTGCVSIPWQSEMIETECFAELNTFHDEDGNVMWNLRPDGINMDERRNGTSKPGFFSRLFRKKNIEVTKSLHDLSHLGVEQQQPPKTSTQTPAVRSSRAASASGRTLVI</sequence>
<organism>
    <name type="scientific">Caenorhabditis elegans</name>
    <dbReference type="NCBI Taxonomy" id="6239"/>
    <lineage>
        <taxon>Eukaryota</taxon>
        <taxon>Metazoa</taxon>
        <taxon>Ecdysozoa</taxon>
        <taxon>Nematoda</taxon>
        <taxon>Chromadorea</taxon>
        <taxon>Rhabditida</taxon>
        <taxon>Rhabditina</taxon>
        <taxon>Rhabditomorpha</taxon>
        <taxon>Rhabditoidea</taxon>
        <taxon>Rhabditidae</taxon>
        <taxon>Peloderinae</taxon>
        <taxon>Caenorhabditis</taxon>
    </lineage>
</organism>
<proteinExistence type="inferred from homology"/>
<feature type="chain" id="PRO_0000086840" description="G protein-coupled receptor kinase 1">
    <location>
        <begin position="1"/>
        <end position="642"/>
    </location>
</feature>
<feature type="domain" description="RGS" evidence="3">
    <location>
        <begin position="52"/>
        <end position="188"/>
    </location>
</feature>
<feature type="domain" description="Protein kinase" evidence="2">
    <location>
        <begin position="203"/>
        <end position="470"/>
    </location>
</feature>
<feature type="domain" description="AGC-kinase C-terminal" evidence="4">
    <location>
        <begin position="480"/>
        <end position="545"/>
    </location>
</feature>
<feature type="region of interest" description="N-terminal">
    <location>
        <begin position="1"/>
        <end position="202"/>
    </location>
</feature>
<feature type="region of interest" description="Disordered" evidence="6">
    <location>
        <begin position="612"/>
        <end position="642"/>
    </location>
</feature>
<feature type="compositionally biased region" description="Low complexity" evidence="6">
    <location>
        <begin position="614"/>
        <end position="636"/>
    </location>
</feature>
<feature type="active site" description="Proton acceptor" evidence="2 5">
    <location>
        <position position="328"/>
    </location>
</feature>
<feature type="binding site" evidence="2">
    <location>
        <begin position="209"/>
        <end position="217"/>
    </location>
    <ligand>
        <name>ATP</name>
        <dbReference type="ChEBI" id="CHEBI:30616"/>
    </ligand>
</feature>
<feature type="binding site" evidence="2">
    <location>
        <position position="232"/>
    </location>
    <ligand>
        <name>ATP</name>
        <dbReference type="ChEBI" id="CHEBI:30616"/>
    </ligand>
</feature>
<name>GRK1_CAEEL</name>
<dbReference type="EC" id="2.7.11.16"/>
<dbReference type="EMBL" id="Z48006">
    <property type="protein sequence ID" value="CAA88047.1"/>
    <property type="molecule type" value="Genomic_DNA"/>
</dbReference>
<dbReference type="PIR" id="T21112">
    <property type="entry name" value="T21112"/>
</dbReference>
<dbReference type="RefSeq" id="NP_509676.1">
    <property type="nucleotide sequence ID" value="NM_077275.9"/>
</dbReference>
<dbReference type="SMR" id="Q09537"/>
<dbReference type="BioGRID" id="46127">
    <property type="interactions" value="2"/>
</dbReference>
<dbReference type="FunCoup" id="Q09537">
    <property type="interactions" value="2019"/>
</dbReference>
<dbReference type="STRING" id="6239.F19C6.1.1"/>
<dbReference type="iPTMnet" id="Q09537"/>
<dbReference type="PaxDb" id="6239-F19C6.1"/>
<dbReference type="PeptideAtlas" id="Q09537"/>
<dbReference type="EnsemblMetazoa" id="F19C6.1.1">
    <property type="protein sequence ID" value="F19C6.1.1"/>
    <property type="gene ID" value="WBGene00001708"/>
</dbReference>
<dbReference type="GeneID" id="181212"/>
<dbReference type="KEGG" id="cel:CELE_F19C6.1"/>
<dbReference type="UCSC" id="F19C6.1">
    <property type="organism name" value="c. elegans"/>
</dbReference>
<dbReference type="AGR" id="WB:WBGene00001708"/>
<dbReference type="CTD" id="181212"/>
<dbReference type="WormBase" id="F19C6.1">
    <property type="protein sequence ID" value="CE01554"/>
    <property type="gene ID" value="WBGene00001708"/>
    <property type="gene designation" value="grk-1"/>
</dbReference>
<dbReference type="eggNOG" id="KOG0986">
    <property type="taxonomic scope" value="Eukaryota"/>
</dbReference>
<dbReference type="GeneTree" id="ENSGT00940000167881"/>
<dbReference type="HOGENOM" id="CLU_000288_63_41_1"/>
<dbReference type="InParanoid" id="Q09537"/>
<dbReference type="OMA" id="WQTEMME"/>
<dbReference type="OrthoDB" id="354826at2759"/>
<dbReference type="PhylomeDB" id="Q09537"/>
<dbReference type="Reactome" id="R-CEL-2514859">
    <property type="pathway name" value="Inactivation, recovery and regulation of the phototransduction cascade"/>
</dbReference>
<dbReference type="PRO" id="PR:Q09537"/>
<dbReference type="Proteomes" id="UP000001940">
    <property type="component" value="Chromosome X"/>
</dbReference>
<dbReference type="GO" id="GO:0005737">
    <property type="term" value="C:cytoplasm"/>
    <property type="evidence" value="ECO:0000318"/>
    <property type="project" value="GO_Central"/>
</dbReference>
<dbReference type="GO" id="GO:0005524">
    <property type="term" value="F:ATP binding"/>
    <property type="evidence" value="ECO:0007669"/>
    <property type="project" value="UniProtKB-KW"/>
</dbReference>
<dbReference type="GO" id="GO:0004703">
    <property type="term" value="F:G protein-coupled receptor kinase activity"/>
    <property type="evidence" value="ECO:0007669"/>
    <property type="project" value="UniProtKB-EC"/>
</dbReference>
<dbReference type="GO" id="GO:0004672">
    <property type="term" value="F:protein kinase activity"/>
    <property type="evidence" value="ECO:0000318"/>
    <property type="project" value="GO_Central"/>
</dbReference>
<dbReference type="GO" id="GO:0009966">
    <property type="term" value="P:regulation of signal transduction"/>
    <property type="evidence" value="ECO:0000318"/>
    <property type="project" value="GO_Central"/>
</dbReference>
<dbReference type="GO" id="GO:0007165">
    <property type="term" value="P:signal transduction"/>
    <property type="evidence" value="ECO:0007669"/>
    <property type="project" value="InterPro"/>
</dbReference>
<dbReference type="FunFam" id="1.10.167.10:FF:000009">
    <property type="entry name" value="G protein-coupled receptor kinase"/>
    <property type="match status" value="1"/>
</dbReference>
<dbReference type="FunFam" id="1.10.510.10:FF:000074">
    <property type="entry name" value="G protein-coupled receptor kinase"/>
    <property type="match status" value="1"/>
</dbReference>
<dbReference type="Gene3D" id="3.30.200.20">
    <property type="entry name" value="Phosphorylase Kinase, domain 1"/>
    <property type="match status" value="1"/>
</dbReference>
<dbReference type="Gene3D" id="1.10.167.10">
    <property type="entry name" value="Regulator of G-protein Signalling 4, domain 2"/>
    <property type="match status" value="1"/>
</dbReference>
<dbReference type="Gene3D" id="1.10.510.10">
    <property type="entry name" value="Transferase(Phosphotransferase) domain 1"/>
    <property type="match status" value="1"/>
</dbReference>
<dbReference type="InterPro" id="IPR000961">
    <property type="entry name" value="AGC-kinase_C"/>
</dbReference>
<dbReference type="InterPro" id="IPR000239">
    <property type="entry name" value="GPCR_kinase"/>
</dbReference>
<dbReference type="InterPro" id="IPR011009">
    <property type="entry name" value="Kinase-like_dom_sf"/>
</dbReference>
<dbReference type="InterPro" id="IPR000719">
    <property type="entry name" value="Prot_kinase_dom"/>
</dbReference>
<dbReference type="InterPro" id="IPR017441">
    <property type="entry name" value="Protein_kinase_ATP_BS"/>
</dbReference>
<dbReference type="InterPro" id="IPR016137">
    <property type="entry name" value="RGS"/>
</dbReference>
<dbReference type="InterPro" id="IPR036305">
    <property type="entry name" value="RGS_sf"/>
</dbReference>
<dbReference type="InterPro" id="IPR044926">
    <property type="entry name" value="RGS_subdomain_2"/>
</dbReference>
<dbReference type="InterPro" id="IPR008271">
    <property type="entry name" value="Ser/Thr_kinase_AS"/>
</dbReference>
<dbReference type="PANTHER" id="PTHR24355:SF28">
    <property type="entry name" value="G PROTEIN-COUPLED RECEPTOR KINASE 2"/>
    <property type="match status" value="1"/>
</dbReference>
<dbReference type="PANTHER" id="PTHR24355">
    <property type="entry name" value="G PROTEIN-COUPLED RECEPTOR KINASE/RIBOSOMAL PROTEIN S6 KINASE"/>
    <property type="match status" value="1"/>
</dbReference>
<dbReference type="Pfam" id="PF00069">
    <property type="entry name" value="Pkinase"/>
    <property type="match status" value="1"/>
</dbReference>
<dbReference type="Pfam" id="PF00615">
    <property type="entry name" value="RGS"/>
    <property type="match status" value="1"/>
</dbReference>
<dbReference type="PRINTS" id="PR00717">
    <property type="entry name" value="GPCRKINASE"/>
</dbReference>
<dbReference type="SMART" id="SM00315">
    <property type="entry name" value="RGS"/>
    <property type="match status" value="1"/>
</dbReference>
<dbReference type="SMART" id="SM00133">
    <property type="entry name" value="S_TK_X"/>
    <property type="match status" value="1"/>
</dbReference>
<dbReference type="SMART" id="SM00220">
    <property type="entry name" value="S_TKc"/>
    <property type="match status" value="1"/>
</dbReference>
<dbReference type="SUPFAM" id="SSF56112">
    <property type="entry name" value="Protein kinase-like (PK-like)"/>
    <property type="match status" value="1"/>
</dbReference>
<dbReference type="SUPFAM" id="SSF48097">
    <property type="entry name" value="Regulator of G-protein signaling, RGS"/>
    <property type="match status" value="1"/>
</dbReference>
<dbReference type="PROSITE" id="PS51285">
    <property type="entry name" value="AGC_KINASE_CTER"/>
    <property type="match status" value="1"/>
</dbReference>
<dbReference type="PROSITE" id="PS00107">
    <property type="entry name" value="PROTEIN_KINASE_ATP"/>
    <property type="match status" value="1"/>
</dbReference>
<dbReference type="PROSITE" id="PS50011">
    <property type="entry name" value="PROTEIN_KINASE_DOM"/>
    <property type="match status" value="1"/>
</dbReference>
<dbReference type="PROSITE" id="PS00108">
    <property type="entry name" value="PROTEIN_KINASE_ST"/>
    <property type="match status" value="1"/>
</dbReference>
<dbReference type="PROSITE" id="PS50132">
    <property type="entry name" value="RGS"/>
    <property type="match status" value="1"/>
</dbReference>
<keyword id="KW-0067">ATP-binding</keyword>
<keyword id="KW-0418">Kinase</keyword>
<keyword id="KW-0547">Nucleotide-binding</keyword>
<keyword id="KW-0597">Phosphoprotein</keyword>
<keyword id="KW-1185">Reference proteome</keyword>
<keyword id="KW-0723">Serine/threonine-protein kinase</keyword>
<keyword id="KW-0808">Transferase</keyword>
<gene>
    <name type="primary">grk-1</name>
    <name type="ORF">F19C6.1</name>
</gene>
<reference key="1">
    <citation type="journal article" date="1998" name="Science">
        <title>Genome sequence of the nematode C. elegans: a platform for investigating biology.</title>
        <authorList>
            <consortium name="The C. elegans sequencing consortium"/>
        </authorList>
    </citation>
    <scope>NUCLEOTIDE SEQUENCE [LARGE SCALE GENOMIC DNA]</scope>
    <source>
        <strain>Bristol N2</strain>
    </source>
</reference>
<accession>Q09537</accession>
<evidence type="ECO:0000250" key="1"/>
<evidence type="ECO:0000255" key="2">
    <source>
        <dbReference type="PROSITE-ProRule" id="PRU00159"/>
    </source>
</evidence>
<evidence type="ECO:0000255" key="3">
    <source>
        <dbReference type="PROSITE-ProRule" id="PRU00171"/>
    </source>
</evidence>
<evidence type="ECO:0000255" key="4">
    <source>
        <dbReference type="PROSITE-ProRule" id="PRU00618"/>
    </source>
</evidence>
<evidence type="ECO:0000255" key="5">
    <source>
        <dbReference type="PROSITE-ProRule" id="PRU10027"/>
    </source>
</evidence>
<evidence type="ECO:0000256" key="6">
    <source>
        <dbReference type="SAM" id="MobiDB-lite"/>
    </source>
</evidence>
<evidence type="ECO:0000305" key="7"/>